<organism>
    <name type="scientific">Xenopus tropicalis</name>
    <name type="common">Western clawed frog</name>
    <name type="synonym">Silurana tropicalis</name>
    <dbReference type="NCBI Taxonomy" id="8364"/>
    <lineage>
        <taxon>Eukaryota</taxon>
        <taxon>Metazoa</taxon>
        <taxon>Chordata</taxon>
        <taxon>Craniata</taxon>
        <taxon>Vertebrata</taxon>
        <taxon>Euteleostomi</taxon>
        <taxon>Amphibia</taxon>
        <taxon>Batrachia</taxon>
        <taxon>Anura</taxon>
        <taxon>Pipoidea</taxon>
        <taxon>Pipidae</taxon>
        <taxon>Xenopodinae</taxon>
        <taxon>Xenopus</taxon>
        <taxon>Silurana</taxon>
    </lineage>
</organism>
<evidence type="ECO:0000250" key="1">
    <source>
        <dbReference type="UniProtKB" id="Q9BRV8"/>
    </source>
</evidence>
<evidence type="ECO:0000255" key="2"/>
<evidence type="ECO:0000256" key="3">
    <source>
        <dbReference type="SAM" id="MobiDB-lite"/>
    </source>
</evidence>
<evidence type="ECO:0000305" key="4"/>
<dbReference type="EMBL" id="CR848255">
    <property type="protein sequence ID" value="CAJ83158.1"/>
    <property type="molecule type" value="mRNA"/>
</dbReference>
<dbReference type="EMBL" id="BC088764">
    <property type="protein sequence ID" value="AAH88764.1"/>
    <property type="molecule type" value="mRNA"/>
</dbReference>
<dbReference type="RefSeq" id="NP_001011474.1">
    <property type="nucleotide sequence ID" value="NM_001011474.1"/>
</dbReference>
<dbReference type="RefSeq" id="XP_012816905.1">
    <property type="nucleotide sequence ID" value="XM_012961451.2"/>
</dbReference>
<dbReference type="SMR" id="Q5I033"/>
<dbReference type="FunCoup" id="Q5I033">
    <property type="interactions" value="2516"/>
</dbReference>
<dbReference type="STRING" id="8364.ENSXETP00000033339"/>
<dbReference type="PaxDb" id="8364-ENSXETP00000046368"/>
<dbReference type="DNASU" id="496965"/>
<dbReference type="GeneID" id="496965"/>
<dbReference type="KEGG" id="xtr:496965"/>
<dbReference type="AGR" id="Xenbase:XB-GENE-1003385"/>
<dbReference type="CTD" id="80143"/>
<dbReference type="Xenbase" id="XB-GENE-1003385">
    <property type="gene designation" value="sike1"/>
</dbReference>
<dbReference type="eggNOG" id="ENOG502QTKS">
    <property type="taxonomic scope" value="Eukaryota"/>
</dbReference>
<dbReference type="HOGENOM" id="CLU_073167_1_0_1"/>
<dbReference type="InParanoid" id="Q5I033"/>
<dbReference type="OMA" id="AIASQMF"/>
<dbReference type="OrthoDB" id="21214at2759"/>
<dbReference type="TreeFam" id="TF324337"/>
<dbReference type="Proteomes" id="UP000008143">
    <property type="component" value="Chromosome 2"/>
</dbReference>
<dbReference type="Bgee" id="ENSXETG00000021446">
    <property type="expression patterns" value="Expressed in ovary and 14 other cell types or tissues"/>
</dbReference>
<dbReference type="GO" id="GO:0090443">
    <property type="term" value="C:FAR/SIN/STRIPAK complex"/>
    <property type="evidence" value="ECO:0000250"/>
    <property type="project" value="UniProtKB"/>
</dbReference>
<dbReference type="GO" id="GO:0030674">
    <property type="term" value="F:protein-macromolecule adaptor activity"/>
    <property type="evidence" value="ECO:0000250"/>
    <property type="project" value="UniProtKB"/>
</dbReference>
<dbReference type="GO" id="GO:0035331">
    <property type="term" value="P:negative regulation of hippo signaling"/>
    <property type="evidence" value="ECO:0000250"/>
    <property type="project" value="UniProtKB"/>
</dbReference>
<dbReference type="InterPro" id="IPR008555">
    <property type="entry name" value="SIKE"/>
</dbReference>
<dbReference type="PANTHER" id="PTHR12186">
    <property type="entry name" value="SIKE FAMILY MEMBER"/>
    <property type="match status" value="1"/>
</dbReference>
<dbReference type="PANTHER" id="PTHR12186:SF4">
    <property type="entry name" value="SUPPRESSOR OF IKBKE 1"/>
    <property type="match status" value="1"/>
</dbReference>
<dbReference type="Pfam" id="PF05769">
    <property type="entry name" value="SIKE"/>
    <property type="match status" value="1"/>
</dbReference>
<protein>
    <recommendedName>
        <fullName>Suppressor of IKBKE 1</fullName>
    </recommendedName>
    <alternativeName>
        <fullName>Suppressor of IKK-epsilon</fullName>
    </alternativeName>
</protein>
<comment type="function">
    <text evidence="1">Suppressor of IKK-epsilon (By similarity). Associates with the striatin-interacting phosphatase and kinase (STRIPAK) core complex, forming the extended (SIKE1:SLMAP)STRIPAK complex. The (SIKE1:SLMAP)STRIPAK complex dephosphorylates STK3 leading to the inhibition of Hippo signaling and the control of cell growth (By similarity).</text>
</comment>
<comment type="subunit">
    <text evidence="1">Interacts with IKBKE and TBK1 via its coiled coil region. Interaction with TBK1 is disrupted upon viral infection or TLR3 stimulation. Interacts with CDC42BPB. Associates with the STRIPAK core complex composed of PP2A catalytic and scaffolding subunits, the striatins (PP2A regulatory subunits), the striatin-associated proteins MOB4, STRIP1 and STRIP2, PDCD10 and members of the STE20 kinases, such as STK24 and STK26.</text>
</comment>
<comment type="similarity">
    <text evidence="4">Belongs to the SIKE family.</text>
</comment>
<sequence length="207" mass="23997">MTCTIDKILQDAKTLLERLKDHDNAAESLIDQSSALHKRVEAMKEVGTAMPEKYQEELADIKDASKLKPHVLLCQENTQIRDLQQENKELWVSLEEHQYALELIMSKYRKQMLQLVANKKPAPTEPVLEAHKTFSSDLECQIDRICVMGDIMRDAIQLDEDKAYNIQEKLAQLELENKELREILSTSKESLHSSKRESEWNFSEKTQ</sequence>
<name>SIKE1_XENTR</name>
<keyword id="KW-0175">Coiled coil</keyword>
<keyword id="KW-1185">Reference proteome</keyword>
<reference key="1">
    <citation type="submission" date="2006-10" db="EMBL/GenBank/DDBJ databases">
        <authorList>
            <consortium name="Sanger Xenopus tropicalis EST/cDNA project"/>
        </authorList>
    </citation>
    <scope>NUCLEOTIDE SEQUENCE [LARGE SCALE MRNA]</scope>
    <source>
        <tissue>Tadpole</tissue>
    </source>
</reference>
<reference key="2">
    <citation type="submission" date="2004-12" db="EMBL/GenBank/DDBJ databases">
        <authorList>
            <consortium name="NIH - Xenopus Gene Collection (XGC) project"/>
        </authorList>
    </citation>
    <scope>NUCLEOTIDE SEQUENCE [LARGE SCALE MRNA]</scope>
</reference>
<gene>
    <name type="primary">sike1</name>
    <name type="synonym">sike</name>
    <name type="ORF">TTpA011e05.1</name>
</gene>
<feature type="chain" id="PRO_0000299056" description="Suppressor of IKBKE 1">
    <location>
        <begin position="1"/>
        <end position="207"/>
    </location>
</feature>
<feature type="region of interest" description="Disordered" evidence="3">
    <location>
        <begin position="186"/>
        <end position="207"/>
    </location>
</feature>
<feature type="coiled-coil region" evidence="2">
    <location>
        <begin position="4"/>
        <end position="32"/>
    </location>
</feature>
<feature type="coiled-coil region" evidence="2">
    <location>
        <begin position="154"/>
        <end position="193"/>
    </location>
</feature>
<feature type="compositionally biased region" description="Basic and acidic residues" evidence="3">
    <location>
        <begin position="189"/>
        <end position="199"/>
    </location>
</feature>
<proteinExistence type="evidence at transcript level"/>
<accession>Q5I033</accession>